<protein>
    <recommendedName>
        <fullName evidence="1">UPF0303 protein Avin_29320</fullName>
    </recommendedName>
</protein>
<dbReference type="EMBL" id="CP001157">
    <property type="protein sequence ID" value="ACO79101.1"/>
    <property type="molecule type" value="Genomic_DNA"/>
</dbReference>
<dbReference type="RefSeq" id="WP_012701488.1">
    <property type="nucleotide sequence ID" value="NC_012560.1"/>
</dbReference>
<dbReference type="SMR" id="C1DM14"/>
<dbReference type="EnsemblBacteria" id="ACO79101">
    <property type="protein sequence ID" value="ACO79101"/>
    <property type="gene ID" value="Avin_29320"/>
</dbReference>
<dbReference type="GeneID" id="88186036"/>
<dbReference type="KEGG" id="avn:Avin_29320"/>
<dbReference type="eggNOG" id="COG4702">
    <property type="taxonomic scope" value="Bacteria"/>
</dbReference>
<dbReference type="HOGENOM" id="CLU_101036_2_2_6"/>
<dbReference type="OrthoDB" id="9815315at2"/>
<dbReference type="Proteomes" id="UP000002424">
    <property type="component" value="Chromosome"/>
</dbReference>
<dbReference type="Gene3D" id="3.30.450.150">
    <property type="entry name" value="Haem-degrading domain"/>
    <property type="match status" value="1"/>
</dbReference>
<dbReference type="HAMAP" id="MF_00761">
    <property type="entry name" value="UPF0303"/>
    <property type="match status" value="1"/>
</dbReference>
<dbReference type="InterPro" id="IPR005624">
    <property type="entry name" value="PduO/GlcC-like"/>
</dbReference>
<dbReference type="InterPro" id="IPR038084">
    <property type="entry name" value="PduO/GlcC-like_sf"/>
</dbReference>
<dbReference type="InterPro" id="IPR010371">
    <property type="entry name" value="YBR137W-like"/>
</dbReference>
<dbReference type="NCBIfam" id="NF002696">
    <property type="entry name" value="PRK02487.1-5"/>
    <property type="match status" value="1"/>
</dbReference>
<dbReference type="PANTHER" id="PTHR28255">
    <property type="match status" value="1"/>
</dbReference>
<dbReference type="PANTHER" id="PTHR28255:SF1">
    <property type="entry name" value="UPF0303 PROTEIN YBR137W"/>
    <property type="match status" value="1"/>
</dbReference>
<dbReference type="Pfam" id="PF03928">
    <property type="entry name" value="HbpS-like"/>
    <property type="match status" value="1"/>
</dbReference>
<dbReference type="PIRSF" id="PIRSF008757">
    <property type="entry name" value="UCP008757"/>
    <property type="match status" value="1"/>
</dbReference>
<dbReference type="SUPFAM" id="SSF143744">
    <property type="entry name" value="GlcG-like"/>
    <property type="match status" value="1"/>
</dbReference>
<organism>
    <name type="scientific">Azotobacter vinelandii (strain DJ / ATCC BAA-1303)</name>
    <dbReference type="NCBI Taxonomy" id="322710"/>
    <lineage>
        <taxon>Bacteria</taxon>
        <taxon>Pseudomonadati</taxon>
        <taxon>Pseudomonadota</taxon>
        <taxon>Gammaproteobacteria</taxon>
        <taxon>Pseudomonadales</taxon>
        <taxon>Pseudomonadaceae</taxon>
        <taxon>Azotobacter</taxon>
    </lineage>
</organism>
<gene>
    <name type="ordered locus">Avin_29320</name>
</gene>
<reference key="1">
    <citation type="journal article" date="2009" name="J. Bacteriol.">
        <title>Genome sequence of Azotobacter vinelandii, an obligate aerobe specialized to support diverse anaerobic metabolic processes.</title>
        <authorList>
            <person name="Setubal J.C."/>
            <person name="Dos Santos P."/>
            <person name="Goldman B.S."/>
            <person name="Ertesvaag H."/>
            <person name="Espin G."/>
            <person name="Rubio L.M."/>
            <person name="Valla S."/>
            <person name="Almeida N.F."/>
            <person name="Balasubramanian D."/>
            <person name="Cromes L."/>
            <person name="Curatti L."/>
            <person name="Du Z."/>
            <person name="Godsy E."/>
            <person name="Goodner B."/>
            <person name="Hellner-Burris K."/>
            <person name="Hernandez J.A."/>
            <person name="Houmiel K."/>
            <person name="Imperial J."/>
            <person name="Kennedy C."/>
            <person name="Larson T.J."/>
            <person name="Latreille P."/>
            <person name="Ligon L.S."/>
            <person name="Lu J."/>
            <person name="Maerk M."/>
            <person name="Miller N.M."/>
            <person name="Norton S."/>
            <person name="O'Carroll I.P."/>
            <person name="Paulsen I."/>
            <person name="Raulfs E.C."/>
            <person name="Roemer R."/>
            <person name="Rosser J."/>
            <person name="Segura D."/>
            <person name="Slater S."/>
            <person name="Stricklin S.L."/>
            <person name="Studholme D.J."/>
            <person name="Sun J."/>
            <person name="Viana C.J."/>
            <person name="Wallin E."/>
            <person name="Wang B."/>
            <person name="Wheeler C."/>
            <person name="Zhu H."/>
            <person name="Dean D.R."/>
            <person name="Dixon R."/>
            <person name="Wood D."/>
        </authorList>
    </citation>
    <scope>NUCLEOTIDE SEQUENCE [LARGE SCALE GENOMIC DNA]</scope>
    <source>
        <strain>DJ / ATCC BAA-1303</strain>
    </source>
</reference>
<accession>C1DM14</accession>
<evidence type="ECO:0000255" key="1">
    <source>
        <dbReference type="HAMAP-Rule" id="MF_00761"/>
    </source>
</evidence>
<feature type="chain" id="PRO_1000212881" description="UPF0303 protein Avin_29320">
    <location>
        <begin position="1"/>
        <end position="166"/>
    </location>
</feature>
<name>Y2932_AZOVD</name>
<sequence>MNLDKDLERIALQEARLQFRSFDAHSAWVLGSRLRALAEQRNLAITIEIQVNGNPLFLSAMPGTAPNNLDWARRKKNVVTLMRRSSYAVGLQLQKDGTSLIEQAGLELRDYAAHGGCFPILLRGTGCIGTVAVSGLPQRDDHELIVEALAGMLEERLEELALDNLA</sequence>
<proteinExistence type="inferred from homology"/>
<comment type="similarity">
    <text evidence="1">Belongs to the UPF0303 family.</text>
</comment>